<name>RIMO_BURCH</name>
<gene>
    <name evidence="1" type="primary">rimO</name>
    <name type="ordered locus">Bcen2424_1782</name>
</gene>
<organism>
    <name type="scientific">Burkholderia cenocepacia (strain HI2424)</name>
    <dbReference type="NCBI Taxonomy" id="331272"/>
    <lineage>
        <taxon>Bacteria</taxon>
        <taxon>Pseudomonadati</taxon>
        <taxon>Pseudomonadota</taxon>
        <taxon>Betaproteobacteria</taxon>
        <taxon>Burkholderiales</taxon>
        <taxon>Burkholderiaceae</taxon>
        <taxon>Burkholderia</taxon>
        <taxon>Burkholderia cepacia complex</taxon>
    </lineage>
</organism>
<sequence>MSQSPKVGFVSLGCPKALVDSEQIITQLRAEGYEISGSYDGADLVVVNTCGFIDEAVQESLDAIGEALTENGKVIVTGCLGAKSSASGSNLIEEVHPKVLAVTGPHAVGEVMQAVHSHLPKPHDPFVDLVPAAGIKLTPRHYAYLKISEGCNHRCTFCIIPSMRGDLVSRPVAEVMLEAENLFKSGVKELLVISQDTSAYGVDVKYRTGFWNGKPIKTRMTDLVAALGELAAQYGAWVRLHYVYPYPSVDEVIPLMAEGAFKGHVLPYLDVPFQHAHPEVLKRMKRPANAEKVLERVQKWREICPDLTIRSTFIAGFPGETEEQFETLLDFIREAELDRVGCFAYSPVEGATANDLDGALPDEVREERRARFMEVAEEVSANRMQRKVGKTLKVLIDEVSAEGGIGRTAADAPEIDGVVYVEPAAKASKRYKVGDFVSVKITGADGHDLWGEV</sequence>
<feature type="chain" id="PRO_0000374731" description="Ribosomal protein uS12 methylthiotransferase RimO">
    <location>
        <begin position="1"/>
        <end position="453"/>
    </location>
</feature>
<feature type="domain" description="MTTase N-terminal" evidence="1">
    <location>
        <begin position="5"/>
        <end position="120"/>
    </location>
</feature>
<feature type="domain" description="Radical SAM core" evidence="2">
    <location>
        <begin position="137"/>
        <end position="382"/>
    </location>
</feature>
<feature type="domain" description="TRAM" evidence="1">
    <location>
        <begin position="385"/>
        <end position="453"/>
    </location>
</feature>
<feature type="binding site" evidence="1">
    <location>
        <position position="14"/>
    </location>
    <ligand>
        <name>[4Fe-4S] cluster</name>
        <dbReference type="ChEBI" id="CHEBI:49883"/>
        <label>1</label>
    </ligand>
</feature>
<feature type="binding site" evidence="1">
    <location>
        <position position="50"/>
    </location>
    <ligand>
        <name>[4Fe-4S] cluster</name>
        <dbReference type="ChEBI" id="CHEBI:49883"/>
        <label>1</label>
    </ligand>
</feature>
<feature type="binding site" evidence="1">
    <location>
        <position position="79"/>
    </location>
    <ligand>
        <name>[4Fe-4S] cluster</name>
        <dbReference type="ChEBI" id="CHEBI:49883"/>
        <label>1</label>
    </ligand>
</feature>
<feature type="binding site" evidence="1">
    <location>
        <position position="151"/>
    </location>
    <ligand>
        <name>[4Fe-4S] cluster</name>
        <dbReference type="ChEBI" id="CHEBI:49883"/>
        <label>2</label>
        <note>4Fe-4S-S-AdoMet</note>
    </ligand>
</feature>
<feature type="binding site" evidence="1">
    <location>
        <position position="155"/>
    </location>
    <ligand>
        <name>[4Fe-4S] cluster</name>
        <dbReference type="ChEBI" id="CHEBI:49883"/>
        <label>2</label>
        <note>4Fe-4S-S-AdoMet</note>
    </ligand>
</feature>
<feature type="binding site" evidence="1">
    <location>
        <position position="158"/>
    </location>
    <ligand>
        <name>[4Fe-4S] cluster</name>
        <dbReference type="ChEBI" id="CHEBI:49883"/>
        <label>2</label>
        <note>4Fe-4S-S-AdoMet</note>
    </ligand>
</feature>
<keyword id="KW-0004">4Fe-4S</keyword>
<keyword id="KW-0963">Cytoplasm</keyword>
<keyword id="KW-0408">Iron</keyword>
<keyword id="KW-0411">Iron-sulfur</keyword>
<keyword id="KW-0479">Metal-binding</keyword>
<keyword id="KW-0949">S-adenosyl-L-methionine</keyword>
<keyword id="KW-0808">Transferase</keyword>
<dbReference type="EC" id="2.8.4.4" evidence="1"/>
<dbReference type="EMBL" id="CP000458">
    <property type="protein sequence ID" value="ABK08533.1"/>
    <property type="molecule type" value="Genomic_DNA"/>
</dbReference>
<dbReference type="RefSeq" id="WP_011549710.1">
    <property type="nucleotide sequence ID" value="NC_008542.1"/>
</dbReference>
<dbReference type="SMR" id="A0K7Q6"/>
<dbReference type="KEGG" id="bch:Bcen2424_1782"/>
<dbReference type="HOGENOM" id="CLU_018697_0_0_4"/>
<dbReference type="GO" id="GO:0005829">
    <property type="term" value="C:cytosol"/>
    <property type="evidence" value="ECO:0007669"/>
    <property type="project" value="TreeGrafter"/>
</dbReference>
<dbReference type="GO" id="GO:0051539">
    <property type="term" value="F:4 iron, 4 sulfur cluster binding"/>
    <property type="evidence" value="ECO:0007669"/>
    <property type="project" value="UniProtKB-UniRule"/>
</dbReference>
<dbReference type="GO" id="GO:0035599">
    <property type="term" value="F:aspartic acid methylthiotransferase activity"/>
    <property type="evidence" value="ECO:0007669"/>
    <property type="project" value="TreeGrafter"/>
</dbReference>
<dbReference type="GO" id="GO:0046872">
    <property type="term" value="F:metal ion binding"/>
    <property type="evidence" value="ECO:0007669"/>
    <property type="project" value="UniProtKB-KW"/>
</dbReference>
<dbReference type="GO" id="GO:0103039">
    <property type="term" value="F:protein methylthiotransferase activity"/>
    <property type="evidence" value="ECO:0007669"/>
    <property type="project" value="UniProtKB-EC"/>
</dbReference>
<dbReference type="GO" id="GO:0006400">
    <property type="term" value="P:tRNA modification"/>
    <property type="evidence" value="ECO:0007669"/>
    <property type="project" value="InterPro"/>
</dbReference>
<dbReference type="CDD" id="cd01335">
    <property type="entry name" value="Radical_SAM"/>
    <property type="match status" value="1"/>
</dbReference>
<dbReference type="FunFam" id="3.40.50.12160:FF:000002">
    <property type="entry name" value="Ribosomal protein S12 methylthiotransferase RimO"/>
    <property type="match status" value="1"/>
</dbReference>
<dbReference type="FunFam" id="3.80.30.20:FF:000001">
    <property type="entry name" value="tRNA-2-methylthio-N(6)-dimethylallyladenosine synthase 2"/>
    <property type="match status" value="1"/>
</dbReference>
<dbReference type="Gene3D" id="3.40.50.12160">
    <property type="entry name" value="Methylthiotransferase, N-terminal domain"/>
    <property type="match status" value="1"/>
</dbReference>
<dbReference type="Gene3D" id="2.40.50.140">
    <property type="entry name" value="Nucleic acid-binding proteins"/>
    <property type="match status" value="1"/>
</dbReference>
<dbReference type="Gene3D" id="3.80.30.20">
    <property type="entry name" value="tm_1862 like domain"/>
    <property type="match status" value="1"/>
</dbReference>
<dbReference type="HAMAP" id="MF_01865">
    <property type="entry name" value="MTTase_RimO"/>
    <property type="match status" value="1"/>
</dbReference>
<dbReference type="InterPro" id="IPR006638">
    <property type="entry name" value="Elp3/MiaA/NifB-like_rSAM"/>
</dbReference>
<dbReference type="InterPro" id="IPR005839">
    <property type="entry name" value="Methylthiotransferase"/>
</dbReference>
<dbReference type="InterPro" id="IPR020612">
    <property type="entry name" value="Methylthiotransferase_CS"/>
</dbReference>
<dbReference type="InterPro" id="IPR013848">
    <property type="entry name" value="Methylthiotransferase_N"/>
</dbReference>
<dbReference type="InterPro" id="IPR038135">
    <property type="entry name" value="Methylthiotransferase_N_sf"/>
</dbReference>
<dbReference type="InterPro" id="IPR012340">
    <property type="entry name" value="NA-bd_OB-fold"/>
</dbReference>
<dbReference type="InterPro" id="IPR005840">
    <property type="entry name" value="Ribosomal_uS12_MeSTrfase_RimO"/>
</dbReference>
<dbReference type="InterPro" id="IPR007197">
    <property type="entry name" value="rSAM"/>
</dbReference>
<dbReference type="InterPro" id="IPR023404">
    <property type="entry name" value="rSAM_horseshoe"/>
</dbReference>
<dbReference type="InterPro" id="IPR002792">
    <property type="entry name" value="TRAM_dom"/>
</dbReference>
<dbReference type="NCBIfam" id="TIGR01125">
    <property type="entry name" value="30S ribosomal protein S12 methylthiotransferase RimO"/>
    <property type="match status" value="1"/>
</dbReference>
<dbReference type="NCBIfam" id="TIGR00089">
    <property type="entry name" value="MiaB/RimO family radical SAM methylthiotransferase"/>
    <property type="match status" value="1"/>
</dbReference>
<dbReference type="PANTHER" id="PTHR43837">
    <property type="entry name" value="RIBOSOMAL PROTEIN S12 METHYLTHIOTRANSFERASE RIMO"/>
    <property type="match status" value="1"/>
</dbReference>
<dbReference type="PANTHER" id="PTHR43837:SF1">
    <property type="entry name" value="RIBOSOMAL PROTEIN US12 METHYLTHIOTRANSFERASE RIMO"/>
    <property type="match status" value="1"/>
</dbReference>
<dbReference type="Pfam" id="PF04055">
    <property type="entry name" value="Radical_SAM"/>
    <property type="match status" value="1"/>
</dbReference>
<dbReference type="Pfam" id="PF18693">
    <property type="entry name" value="TRAM_2"/>
    <property type="match status" value="1"/>
</dbReference>
<dbReference type="Pfam" id="PF00919">
    <property type="entry name" value="UPF0004"/>
    <property type="match status" value="1"/>
</dbReference>
<dbReference type="SFLD" id="SFLDG01082">
    <property type="entry name" value="B12-binding_domain_containing"/>
    <property type="match status" value="1"/>
</dbReference>
<dbReference type="SFLD" id="SFLDG01061">
    <property type="entry name" value="methylthiotransferase"/>
    <property type="match status" value="1"/>
</dbReference>
<dbReference type="SFLD" id="SFLDF00274">
    <property type="entry name" value="ribosomal_protein_S12_methylth"/>
    <property type="match status" value="1"/>
</dbReference>
<dbReference type="SMART" id="SM00729">
    <property type="entry name" value="Elp3"/>
    <property type="match status" value="1"/>
</dbReference>
<dbReference type="SUPFAM" id="SSF102114">
    <property type="entry name" value="Radical SAM enzymes"/>
    <property type="match status" value="1"/>
</dbReference>
<dbReference type="PROSITE" id="PS51449">
    <property type="entry name" value="MTTASE_N"/>
    <property type="match status" value="1"/>
</dbReference>
<dbReference type="PROSITE" id="PS01278">
    <property type="entry name" value="MTTASE_RADICAL"/>
    <property type="match status" value="1"/>
</dbReference>
<dbReference type="PROSITE" id="PS51918">
    <property type="entry name" value="RADICAL_SAM"/>
    <property type="match status" value="1"/>
</dbReference>
<dbReference type="PROSITE" id="PS50926">
    <property type="entry name" value="TRAM"/>
    <property type="match status" value="1"/>
</dbReference>
<protein>
    <recommendedName>
        <fullName evidence="1">Ribosomal protein uS12 methylthiotransferase RimO</fullName>
        <shortName evidence="1">uS12 MTTase</shortName>
        <shortName evidence="1">uS12 methylthiotransferase</shortName>
        <ecNumber evidence="1">2.8.4.4</ecNumber>
    </recommendedName>
    <alternativeName>
        <fullName evidence="1">Ribosomal protein uS12 (aspartate-C(3))-methylthiotransferase</fullName>
    </alternativeName>
    <alternativeName>
        <fullName evidence="1">Ribosome maturation factor RimO</fullName>
    </alternativeName>
</protein>
<proteinExistence type="inferred from homology"/>
<evidence type="ECO:0000255" key="1">
    <source>
        <dbReference type="HAMAP-Rule" id="MF_01865"/>
    </source>
</evidence>
<evidence type="ECO:0000255" key="2">
    <source>
        <dbReference type="PROSITE-ProRule" id="PRU01266"/>
    </source>
</evidence>
<reference key="1">
    <citation type="submission" date="2006-08" db="EMBL/GenBank/DDBJ databases">
        <title>Complete sequence of chromosome 1 of Burkholderia cenocepacia HI2424.</title>
        <authorList>
            <person name="Copeland A."/>
            <person name="Lucas S."/>
            <person name="Lapidus A."/>
            <person name="Barry K."/>
            <person name="Detter J.C."/>
            <person name="Glavina del Rio T."/>
            <person name="Hammon N."/>
            <person name="Israni S."/>
            <person name="Pitluck S."/>
            <person name="Chain P."/>
            <person name="Malfatti S."/>
            <person name="Shin M."/>
            <person name="Vergez L."/>
            <person name="Schmutz J."/>
            <person name="Larimer F."/>
            <person name="Land M."/>
            <person name="Hauser L."/>
            <person name="Kyrpides N."/>
            <person name="Kim E."/>
            <person name="LiPuma J.J."/>
            <person name="Gonzalez C.F."/>
            <person name="Konstantinidis K."/>
            <person name="Tiedje J.M."/>
            <person name="Richardson P."/>
        </authorList>
    </citation>
    <scope>NUCLEOTIDE SEQUENCE [LARGE SCALE GENOMIC DNA]</scope>
    <source>
        <strain>HI2424</strain>
    </source>
</reference>
<comment type="function">
    <text evidence="1">Catalyzes the methylthiolation of an aspartic acid residue of ribosomal protein uS12.</text>
</comment>
<comment type="catalytic activity">
    <reaction evidence="1">
        <text>L-aspartate(89)-[ribosomal protein uS12]-hydrogen + (sulfur carrier)-SH + AH2 + 2 S-adenosyl-L-methionine = 3-methylsulfanyl-L-aspartate(89)-[ribosomal protein uS12]-hydrogen + (sulfur carrier)-H + 5'-deoxyadenosine + L-methionine + A + S-adenosyl-L-homocysteine + 2 H(+)</text>
        <dbReference type="Rhea" id="RHEA:37087"/>
        <dbReference type="Rhea" id="RHEA-COMP:10460"/>
        <dbReference type="Rhea" id="RHEA-COMP:10461"/>
        <dbReference type="Rhea" id="RHEA-COMP:14737"/>
        <dbReference type="Rhea" id="RHEA-COMP:14739"/>
        <dbReference type="ChEBI" id="CHEBI:13193"/>
        <dbReference type="ChEBI" id="CHEBI:15378"/>
        <dbReference type="ChEBI" id="CHEBI:17319"/>
        <dbReference type="ChEBI" id="CHEBI:17499"/>
        <dbReference type="ChEBI" id="CHEBI:29917"/>
        <dbReference type="ChEBI" id="CHEBI:29961"/>
        <dbReference type="ChEBI" id="CHEBI:57844"/>
        <dbReference type="ChEBI" id="CHEBI:57856"/>
        <dbReference type="ChEBI" id="CHEBI:59789"/>
        <dbReference type="ChEBI" id="CHEBI:64428"/>
        <dbReference type="ChEBI" id="CHEBI:73599"/>
        <dbReference type="EC" id="2.8.4.4"/>
    </reaction>
</comment>
<comment type="cofactor">
    <cofactor evidence="1">
        <name>[4Fe-4S] cluster</name>
        <dbReference type="ChEBI" id="CHEBI:49883"/>
    </cofactor>
    <text evidence="1">Binds 2 [4Fe-4S] clusters. One cluster is coordinated with 3 cysteines and an exchangeable S-adenosyl-L-methionine.</text>
</comment>
<comment type="subcellular location">
    <subcellularLocation>
        <location evidence="1">Cytoplasm</location>
    </subcellularLocation>
</comment>
<comment type="similarity">
    <text evidence="1">Belongs to the methylthiotransferase family. RimO subfamily.</text>
</comment>
<accession>A0K7Q6</accession>